<comment type="function">
    <text evidence="1">Binds to DNA and alters its conformation. May be involved in regulation of gene expression, nucleoid organization and DNA protection.</text>
</comment>
<comment type="subunit">
    <text evidence="1">Homodimer.</text>
</comment>
<comment type="subcellular location">
    <subcellularLocation>
        <location evidence="1">Cytoplasm</location>
        <location evidence="1">Nucleoid</location>
    </subcellularLocation>
</comment>
<comment type="similarity">
    <text evidence="1">Belongs to the YbaB/EbfC family.</text>
</comment>
<keyword id="KW-0963">Cytoplasm</keyword>
<keyword id="KW-0238">DNA-binding</keyword>
<keyword id="KW-1185">Reference proteome</keyword>
<protein>
    <recommendedName>
        <fullName evidence="1">Nucleoid-associated protein Dtur_0258</fullName>
    </recommendedName>
</protein>
<organism>
    <name type="scientific">Dictyoglomus turgidum (strain DSM 6724 / Z-1310)</name>
    <dbReference type="NCBI Taxonomy" id="515635"/>
    <lineage>
        <taxon>Bacteria</taxon>
        <taxon>Pseudomonadati</taxon>
        <taxon>Dictyoglomota</taxon>
        <taxon>Dictyoglomia</taxon>
        <taxon>Dictyoglomales</taxon>
        <taxon>Dictyoglomaceae</taxon>
        <taxon>Dictyoglomus</taxon>
    </lineage>
</organism>
<feature type="chain" id="PRO_1000119317" description="Nucleoid-associated protein Dtur_0258">
    <location>
        <begin position="1"/>
        <end position="104"/>
    </location>
</feature>
<feature type="region of interest" description="Disordered" evidence="2">
    <location>
        <begin position="84"/>
        <end position="104"/>
    </location>
</feature>
<reference key="1">
    <citation type="journal article" date="2016" name="Front. Microbiol.">
        <title>The complete genome sequence of hyperthermophile Dictyoglomus turgidum DSM 6724 reveals a specialized carbohydrate fermentor.</title>
        <authorList>
            <person name="Brumm P.J."/>
            <person name="Gowda K."/>
            <person name="Robb F.T."/>
            <person name="Mead D.A."/>
        </authorList>
    </citation>
    <scope>NUCLEOTIDE SEQUENCE [LARGE SCALE GENOMIC DNA]</scope>
    <source>
        <strain>DSM 6724 / Z-1310</strain>
    </source>
</reference>
<gene>
    <name type="ordered locus">Dtur_0258</name>
</gene>
<sequence length="104" mass="11378">MKNPFEAMKQLKKLQEKMAKIEEELEQTLVEGTAGGGVVKIVMTAKEEVKEVKIDPEVVNKDEVDILEDLIAAALRDALTKAKEKSAEKMGSLTDGLPLPPGLF</sequence>
<proteinExistence type="inferred from homology"/>
<dbReference type="EMBL" id="CP001251">
    <property type="protein sequence ID" value="ACK41584.1"/>
    <property type="molecule type" value="Genomic_DNA"/>
</dbReference>
<dbReference type="RefSeq" id="WP_012582669.1">
    <property type="nucleotide sequence ID" value="NC_011661.1"/>
</dbReference>
<dbReference type="RefSeq" id="YP_002352198.1">
    <property type="nucleotide sequence ID" value="NC_011661.1"/>
</dbReference>
<dbReference type="SMR" id="B8E1Q9"/>
<dbReference type="FunCoup" id="B8E1Q9">
    <property type="interactions" value="231"/>
</dbReference>
<dbReference type="STRING" id="515635.Dtur_0258"/>
<dbReference type="EnsemblBacteria" id="ACK41584">
    <property type="protein sequence ID" value="ACK41584"/>
    <property type="gene ID" value="Dtur_0258"/>
</dbReference>
<dbReference type="KEGG" id="dtu:Dtur_0258"/>
<dbReference type="PATRIC" id="fig|515635.4.peg.271"/>
<dbReference type="eggNOG" id="COG0718">
    <property type="taxonomic scope" value="Bacteria"/>
</dbReference>
<dbReference type="HOGENOM" id="CLU_140930_0_1_0"/>
<dbReference type="InParanoid" id="B8E1Q9"/>
<dbReference type="OrthoDB" id="9803080at2"/>
<dbReference type="Proteomes" id="UP000007719">
    <property type="component" value="Chromosome"/>
</dbReference>
<dbReference type="GO" id="GO:0043590">
    <property type="term" value="C:bacterial nucleoid"/>
    <property type="evidence" value="ECO:0007669"/>
    <property type="project" value="UniProtKB-UniRule"/>
</dbReference>
<dbReference type="GO" id="GO:0005829">
    <property type="term" value="C:cytosol"/>
    <property type="evidence" value="ECO:0000318"/>
    <property type="project" value="GO_Central"/>
</dbReference>
<dbReference type="GO" id="GO:0003677">
    <property type="term" value="F:DNA binding"/>
    <property type="evidence" value="ECO:0000318"/>
    <property type="project" value="GO_Central"/>
</dbReference>
<dbReference type="Gene3D" id="3.30.1310.10">
    <property type="entry name" value="Nucleoid-associated protein YbaB-like domain"/>
    <property type="match status" value="1"/>
</dbReference>
<dbReference type="HAMAP" id="MF_00274">
    <property type="entry name" value="DNA_YbaB_EbfC"/>
    <property type="match status" value="1"/>
</dbReference>
<dbReference type="InterPro" id="IPR036894">
    <property type="entry name" value="YbaB-like_sf"/>
</dbReference>
<dbReference type="InterPro" id="IPR004401">
    <property type="entry name" value="YbaB/EbfC"/>
</dbReference>
<dbReference type="NCBIfam" id="TIGR00103">
    <property type="entry name" value="DNA_YbaB_EbfC"/>
    <property type="match status" value="1"/>
</dbReference>
<dbReference type="PANTHER" id="PTHR33449">
    <property type="entry name" value="NUCLEOID-ASSOCIATED PROTEIN YBAB"/>
    <property type="match status" value="1"/>
</dbReference>
<dbReference type="PANTHER" id="PTHR33449:SF1">
    <property type="entry name" value="NUCLEOID-ASSOCIATED PROTEIN YBAB"/>
    <property type="match status" value="1"/>
</dbReference>
<dbReference type="Pfam" id="PF02575">
    <property type="entry name" value="YbaB_DNA_bd"/>
    <property type="match status" value="1"/>
</dbReference>
<dbReference type="PIRSF" id="PIRSF004555">
    <property type="entry name" value="UCP004555"/>
    <property type="match status" value="1"/>
</dbReference>
<dbReference type="SUPFAM" id="SSF82607">
    <property type="entry name" value="YbaB-like"/>
    <property type="match status" value="1"/>
</dbReference>
<evidence type="ECO:0000255" key="1">
    <source>
        <dbReference type="HAMAP-Rule" id="MF_00274"/>
    </source>
</evidence>
<evidence type="ECO:0000256" key="2">
    <source>
        <dbReference type="SAM" id="MobiDB-lite"/>
    </source>
</evidence>
<accession>B8E1Q9</accession>
<name>Y258_DICTD</name>